<comment type="function">
    <text evidence="1">Has reverse transcriptase activity required for target-primed reverse transcription of the LINE-1 element mRNA, a crucial step in LINE-1 retrotransposition (By similarity). Selectively binds and reversely transcribes RNA with a poly(A) tail consisting of at least 20 adenosines (By similarity). Also has endonuclease activity that allows the introduction of nicks in the chromosomal target DNA (By similarity). Cleaves DNA in AT-rich regions between a 5' stretch of purines and a 3' stretch of pyrimidines, corresponding to the sites of LINE-1 integration in the genome (By similarity). Conformational properties of the target DNA sequence rather than specific nucleotides are key determinants of the ORF2p capacity for sequence-specific DNA recognition (By similarity). Unlike related endonucleases, does not bend the DNA helix but causes compression near the cleavage site (By similarity).</text>
</comment>
<comment type="catalytic activity">
    <reaction evidence="2">
        <text>DNA(n) + a 2'-deoxyribonucleoside 5'-triphosphate = DNA(n+1) + diphosphate</text>
        <dbReference type="Rhea" id="RHEA:22508"/>
        <dbReference type="Rhea" id="RHEA-COMP:17339"/>
        <dbReference type="Rhea" id="RHEA-COMP:17340"/>
        <dbReference type="ChEBI" id="CHEBI:33019"/>
        <dbReference type="ChEBI" id="CHEBI:61560"/>
        <dbReference type="ChEBI" id="CHEBI:173112"/>
        <dbReference type="EC" id="2.7.7.49"/>
    </reaction>
</comment>
<comment type="subunit">
    <text evidence="4">Interacts with MOV10.</text>
</comment>
<comment type="domain">
    <text evidence="1">The FADD motif is located within the catalytic core and is essential for reverse transcriptase activity (By similarity). The C-terminal segment (CTS) binds to RNA with high affinity in the nanomolar range but without apparent sequence specificity (By similarity).</text>
</comment>
<comment type="domain">
    <text evidence="1">The size and flexibility of the betaB6-betaB5 hairpin loop at residues 198-212 are crucial for activity. Variation of the loop sequence results in an altered DNA nicking profile including novel sites.</text>
</comment>
<comment type="miscellaneous">
    <text>An active LINE-1 encodes for 2 proteins translated from a single RNA containing two non-overlapping ORFs, ORF1 and ORF2. ORF2p is described in that entry as a representative of all ORF2p potentially expressed by active elements in mouse genome. ORF1p is described in the related entry AC P11260.</text>
</comment>
<comment type="sequence caution" evidence="5">
    <conflict type="frameshift">
        <sequence resource="EMBL-CDS" id="CAA27363"/>
    </conflict>
</comment>
<evidence type="ECO:0000250" key="1">
    <source>
        <dbReference type="UniProtKB" id="O00370"/>
    </source>
</evidence>
<evidence type="ECO:0000255" key="2">
    <source>
        <dbReference type="PROSITE-ProRule" id="PRU00405"/>
    </source>
</evidence>
<evidence type="ECO:0000256" key="3">
    <source>
        <dbReference type="SAM" id="MobiDB-lite"/>
    </source>
</evidence>
<evidence type="ECO:0000269" key="4">
    <source>
    </source>
</evidence>
<evidence type="ECO:0000305" key="5"/>
<proteinExistence type="evidence at protein level"/>
<keyword id="KW-0903">Direct protein sequencing</keyword>
<keyword id="KW-0233">DNA recombination</keyword>
<keyword id="KW-0255">Endonuclease</keyword>
<keyword id="KW-0378">Hydrolase</keyword>
<keyword id="KW-0460">Magnesium</keyword>
<keyword id="KW-0479">Metal-binding</keyword>
<keyword id="KW-0511">Multifunctional enzyme</keyword>
<keyword id="KW-0540">Nuclease</keyword>
<keyword id="KW-0548">Nucleotidyltransferase</keyword>
<keyword id="KW-1185">Reference proteome</keyword>
<keyword id="KW-0695">RNA-directed DNA polymerase</keyword>
<keyword id="KW-0808">Transferase</keyword>
<reference key="1">
    <citation type="journal article" date="1986" name="Mol. Cell. Biol.">
        <title>The sequence of a large L1Md element reveals a tandemly repeated 5' end and several features found in retrotransposons.</title>
        <authorList>
            <person name="Loeb D.D."/>
            <person name="Padgett R.W."/>
            <person name="Hardies S.C."/>
            <person name="Shehee W.R."/>
            <person name="Comer M.B."/>
            <person name="Edgell M.H."/>
            <person name="Hutchison C.A. III"/>
        </authorList>
    </citation>
    <scope>NUCLEOTIDE SEQUENCE [GENOMIC DNA]</scope>
</reference>
<reference key="2">
    <citation type="journal article" date="1995" name="Gene">
        <title>Characterization of a LINE-1 cDNA that originated from RNA present in ribonucleoprotein particles: implications for the structure of an active mouse LINE-1.</title>
        <authorList>
            <person name="Martin S.L."/>
        </authorList>
    </citation>
    <scope>NUCLEOTIDE SEQUENCE [MRNA]</scope>
</reference>
<reference key="3">
    <citation type="journal article" date="1986" name="Nucleic Acids Res.">
        <title>Conservation in the 5' region of the long interspersed mouse L1 repeat: implications of comparative sequence analysis.</title>
        <authorList>
            <person name="Mottez E."/>
            <person name="Rogan P.K."/>
            <person name="Manuelidis L."/>
        </authorList>
    </citation>
    <scope>NUCLEOTIDE SEQUENCE [GENOMIC DNA] OF 1-484</scope>
</reference>
<reference key="4">
    <citation type="submission" date="2009-01" db="UniProtKB">
        <authorList>
            <person name="Lubec G."/>
            <person name="Sunyer B."/>
            <person name="Chen W.-Q."/>
        </authorList>
    </citation>
    <scope>PROTEIN SEQUENCE OF 99-108</scope>
    <scope>IDENTIFICATION BY MASS SPECTROMETRY</scope>
    <source>
        <strain>OF1</strain>
        <tissue>Hippocampus</tissue>
    </source>
</reference>
<reference key="5">
    <citation type="journal article" date="2017" name="BMC Biol.">
        <title>Mov10 suppresses retroelements and regulates neuronal development and function in the developing brain.</title>
        <authorList>
            <person name="Skariah G."/>
            <person name="Seimetz J."/>
            <person name="Norsworthy M."/>
            <person name="Lannom M.C."/>
            <person name="Kenny P.J."/>
            <person name="Elrakhawy M."/>
            <person name="Forsthoefel C."/>
            <person name="Drnevich J."/>
            <person name="Kalsotra A."/>
            <person name="Ceman S."/>
        </authorList>
    </citation>
    <scope>INTERACTION WITH MOV10</scope>
</reference>
<organism>
    <name type="scientific">Mus musculus</name>
    <name type="common">Mouse</name>
    <dbReference type="NCBI Taxonomy" id="10090"/>
    <lineage>
        <taxon>Eukaryota</taxon>
        <taxon>Metazoa</taxon>
        <taxon>Chordata</taxon>
        <taxon>Craniata</taxon>
        <taxon>Vertebrata</taxon>
        <taxon>Euteleostomi</taxon>
        <taxon>Mammalia</taxon>
        <taxon>Eutheria</taxon>
        <taxon>Euarchontoglires</taxon>
        <taxon>Glires</taxon>
        <taxon>Rodentia</taxon>
        <taxon>Myomorpha</taxon>
        <taxon>Muroidea</taxon>
        <taxon>Muridae</taxon>
        <taxon>Murinae</taxon>
        <taxon>Mus</taxon>
        <taxon>Mus</taxon>
    </lineage>
</organism>
<gene>
    <name type="primary">Pol</name>
    <name type="synonym">Gm17492</name>
</gene>
<protein>
    <recommendedName>
        <fullName>LINE-1 retrotransposable element ORF2 protein</fullName>
        <shortName evidence="1">ORF2p</shortName>
    </recommendedName>
    <alternativeName>
        <fullName>Long interspersed element-1</fullName>
        <shortName>L1</shortName>
    </alternativeName>
    <alternativeName>
        <fullName>Retrovirus-related Pol polyprotein LINE-1</fullName>
    </alternativeName>
    <domain>
        <recommendedName>
            <fullName>Reverse transcriptase</fullName>
            <ecNumber evidence="1">2.7.7.49</ecNumber>
        </recommendedName>
    </domain>
    <domain>
        <recommendedName>
            <fullName>Endonuclease</fullName>
            <ecNumber evidence="1">3.1.21.-</ecNumber>
        </recommendedName>
    </domain>
</protein>
<dbReference type="EC" id="2.7.7.49" evidence="1"/>
<dbReference type="EC" id="3.1.21.-" evidence="1"/>
<dbReference type="EMBL" id="M13002">
    <property type="protein sequence ID" value="AAA66024.1"/>
    <property type="molecule type" value="Genomic_DNA"/>
</dbReference>
<dbReference type="EMBL" id="U15647">
    <property type="protein sequence ID" value="AAA67727.1"/>
    <property type="molecule type" value="mRNA"/>
</dbReference>
<dbReference type="EMBL" id="X03725">
    <property type="protein sequence ID" value="CAA27363.1"/>
    <property type="status" value="ALT_FRAME"/>
    <property type="molecule type" value="Genomic_DNA"/>
</dbReference>
<dbReference type="PIR" id="B58927">
    <property type="entry name" value="GNMSLL"/>
</dbReference>
<dbReference type="SMR" id="P11369"/>
<dbReference type="FunCoup" id="P11369">
    <property type="interactions" value="1"/>
</dbReference>
<dbReference type="STRING" id="10090.ENSMUSP00000137421"/>
<dbReference type="PhosphoSitePlus" id="P11369"/>
<dbReference type="SwissPalm" id="P11369"/>
<dbReference type="PaxDb" id="10090-ENSMUSP00000137421"/>
<dbReference type="ProteomicsDB" id="291958"/>
<dbReference type="UCSC" id="uc029qyg.1">
    <property type="organism name" value="mouse"/>
</dbReference>
<dbReference type="eggNOG" id="ENOG502S9XJ">
    <property type="taxonomic scope" value="Eukaryota"/>
</dbReference>
<dbReference type="InParanoid" id="P11369"/>
<dbReference type="Proteomes" id="UP000000589">
    <property type="component" value="Unplaced"/>
</dbReference>
<dbReference type="RNAct" id="P11369">
    <property type="molecule type" value="protein"/>
</dbReference>
<dbReference type="GO" id="GO:0004519">
    <property type="term" value="F:endonuclease activity"/>
    <property type="evidence" value="ECO:0007669"/>
    <property type="project" value="UniProtKB-KW"/>
</dbReference>
<dbReference type="GO" id="GO:0046872">
    <property type="term" value="F:metal ion binding"/>
    <property type="evidence" value="ECO:0007669"/>
    <property type="project" value="UniProtKB-KW"/>
</dbReference>
<dbReference type="GO" id="GO:0003964">
    <property type="term" value="F:RNA-directed DNA polymerase activity"/>
    <property type="evidence" value="ECO:0007669"/>
    <property type="project" value="UniProtKB-KW"/>
</dbReference>
<dbReference type="GO" id="GO:0006310">
    <property type="term" value="P:DNA recombination"/>
    <property type="evidence" value="ECO:0007669"/>
    <property type="project" value="UniProtKB-KW"/>
</dbReference>
<dbReference type="CDD" id="cd09076">
    <property type="entry name" value="L1-EN"/>
    <property type="match status" value="1"/>
</dbReference>
<dbReference type="CDD" id="cd01650">
    <property type="entry name" value="RT_nLTR_like"/>
    <property type="match status" value="1"/>
</dbReference>
<dbReference type="Gene3D" id="3.60.10.10">
    <property type="entry name" value="Endonuclease/exonuclease/phosphatase"/>
    <property type="match status" value="1"/>
</dbReference>
<dbReference type="InterPro" id="IPR043502">
    <property type="entry name" value="DNA/RNA_pol_sf"/>
</dbReference>
<dbReference type="InterPro" id="IPR036691">
    <property type="entry name" value="Endo/exonu/phosph_ase_sf"/>
</dbReference>
<dbReference type="InterPro" id="IPR005135">
    <property type="entry name" value="Endo/exonuclease/phosphatase"/>
</dbReference>
<dbReference type="InterPro" id="IPR000477">
    <property type="entry name" value="RT_dom"/>
</dbReference>
<dbReference type="PANTHER" id="PTHR19446">
    <property type="entry name" value="REVERSE TRANSCRIPTASES"/>
    <property type="match status" value="1"/>
</dbReference>
<dbReference type="Pfam" id="PF03372">
    <property type="entry name" value="Exo_endo_phos"/>
    <property type="match status" value="1"/>
</dbReference>
<dbReference type="Pfam" id="PF00078">
    <property type="entry name" value="RVT_1"/>
    <property type="match status" value="1"/>
</dbReference>
<dbReference type="SUPFAM" id="SSF56672">
    <property type="entry name" value="DNA/RNA polymerases"/>
    <property type="match status" value="1"/>
</dbReference>
<dbReference type="SUPFAM" id="SSF56219">
    <property type="entry name" value="DNase I-like"/>
    <property type="match status" value="1"/>
</dbReference>
<dbReference type="PROSITE" id="PS50878">
    <property type="entry name" value="RT_POL"/>
    <property type="match status" value="1"/>
</dbReference>
<name>LORF2_MOUSE</name>
<sequence>MPTLTTKIKGSNNYFSLISLNINGLNSPIKRHRLTDWLHKQDPTFCCLQETHLREKDRHYLRVKGWKTIFQANGLKKQAGVAILISDKIDFQPKVIKKDKEGHFILIKGKILQEELSILNIYAPNARAATFIRDTLVKLKAYIAPHTIIVGDFNTPLSSKDRSWKQKLNRDTVKLTEVMKQMDLTDIYRTFYPKTKGYTFFSAPHGTFSKIDHIIGHKTGLNRYKNIEIVPCILSDHHGLRLIFNNNINNGKPTFTWKLNNTLLNDTLVKEGIKKEIKDFLEFNENEATTYPNLWDTMKAFLRGKLIALSASKKKRETAHTSSLTTHLKALEKKEANSPKRSRRQEIIKLRGEINQVETRRTIQRINQTRSWFFEKINKIDKPLARLTKGHRDKILINKIRNEKGDITTDPEEIQNTIRSFYKRLYSTKLENLDEMDKFLDRYQVPKLNQDQVDHLNSPISPKEIEAVINSLPTKKSPGPDGFSAEFYQTFKEDLIPILHKLFHKIEVEGTLPNSFYEATITLIPKPQKDPTKIENFRPISLMNIDAKILNKILANRIQEHIKAIIHPDQVGFIPGMQGWFNIRKSINVIHYINKLKDKNHMIISLDAEKAFDKIQHPFMIKVLERSGIQGPYLNMIKAIYSKPVANIKVNGEKLEAIPLKSGTRQGCPLSPYLFNIVLEVLARAIRQQKEIKGIQIGKEEVKISLLADDMIVYISDPKNSTRELLNLINSFGEVVGYKINSNKSMAFLYTKNKQAEKEIRETTPFSIVTNNIKYLGVTLTKEVKDLYDKNFKSLKKEIKEDLRRWKDLPCSWIGRINIVKMAILPKAIYRFNAIPIKIPTQFFNELEGAICKFVWNNKKPRIAKSLLKDKRTSGGITMPDLKLYYRAIVIKTAWYWYRDRQVDQWNRIEDPEMNPHTYGHLIFDKGAKTIQWKKDSIFNNWCWHNWLLSCRRMRIDPYLSPCTKVKSKWIKELHIKPETLKLIEEKVGKSLEDMGTGEKFLNRTAMACAVRSRIDKWDLMKLQSFCKAKDTVNKTKRPPTDWERIFTYPKSDRGLISNIYKELKKVDFRKSNNPIKKWGSELNKEFSPEEYRMAEKHLKKCSTSLIIREMQIKTTLRFHLTPVRMAKIKNSGDSRCWRGCGERGTLLHCWWECRLVQPLWKSVWRFLRKLDIVLPEDPAIPLLGIYPEDAPTGKKDTCSTMFIAALFIIARSWKEPRCPSTEEWIQKMWYIYTMEYYSAIKKNEFMKFLAKWMDLEGIILSEVTHSQRNSHNMYSLISGY</sequence>
<accession>P11369</accession>
<accession>Q60713</accession>
<accession>Q61787</accession>
<feature type="chain" id="PRO_0000058509" description="LINE-1 retrotransposable element ORF2 protein">
    <location>
        <begin position="1"/>
        <end position="1281"/>
    </location>
</feature>
<feature type="domain" description="Reverse transcriptase" evidence="1 2">
    <location>
        <begin position="505"/>
        <end position="780"/>
    </location>
</feature>
<feature type="domain" description="DUF1725">
    <location>
        <begin position="1247"/>
        <end position="1266"/>
    </location>
</feature>
<feature type="region of interest" description="Endonuclease activity" evidence="1">
    <location>
        <begin position="1"/>
        <end position="245"/>
    </location>
</feature>
<feature type="region of interest" description="Disordered" evidence="3">
    <location>
        <begin position="318"/>
        <end position="344"/>
    </location>
</feature>
<feature type="region of interest" description="Carboxy-terminal segment; binds RNA" evidence="1">
    <location>
        <begin position="1103"/>
        <end position="1281"/>
    </location>
</feature>
<feature type="short sequence motif" description="FADD motif" evidence="1">
    <location>
        <begin position="707"/>
        <end position="710"/>
    </location>
</feature>
<feature type="compositionally biased region" description="Basic and acidic residues" evidence="3">
    <location>
        <begin position="329"/>
        <end position="344"/>
    </location>
</feature>
<feature type="binding site" evidence="1">
    <location>
        <position position="50"/>
    </location>
    <ligand>
        <name>Mg(2+)</name>
        <dbReference type="ChEBI" id="CHEBI:18420"/>
        <label>2</label>
    </ligand>
</feature>
<feature type="binding site" evidence="1">
    <location>
        <position position="526"/>
    </location>
    <ligand>
        <name>dTTP</name>
        <dbReference type="ChEBI" id="CHEBI:37568"/>
        <note>substrate</note>
    </ligand>
</feature>
<feature type="binding site" evidence="1">
    <location>
        <position position="529"/>
    </location>
    <ligand>
        <name>dTTP</name>
        <dbReference type="ChEBI" id="CHEBI:37568"/>
        <note>substrate</note>
    </ligand>
</feature>
<feature type="binding site" evidence="1">
    <location>
        <position position="538"/>
    </location>
    <ligand>
        <name>dTTP</name>
        <dbReference type="ChEBI" id="CHEBI:37568"/>
        <note>substrate</note>
    </ligand>
</feature>
<feature type="binding site" evidence="1">
    <location>
        <position position="563"/>
    </location>
    <ligand>
        <name>Mg(2+)</name>
        <dbReference type="ChEBI" id="CHEBI:18420"/>
        <label>3</label>
    </ligand>
</feature>
<feature type="binding site" evidence="1">
    <location>
        <position position="566"/>
    </location>
    <ligand>
        <name>Mg(2+)</name>
        <dbReference type="ChEBI" id="CHEBI:18420"/>
        <label>3</label>
    </ligand>
</feature>
<feature type="binding site" evidence="1">
    <location>
        <position position="567"/>
    </location>
    <ligand>
        <name>Mg(2+)</name>
        <dbReference type="ChEBI" id="CHEBI:18420"/>
        <label>3</label>
    </ligand>
</feature>
<feature type="binding site" evidence="1">
    <location>
        <position position="607"/>
    </location>
    <ligand>
        <name>dTTP</name>
        <dbReference type="ChEBI" id="CHEBI:37568"/>
        <note>substrate</note>
    </ligand>
</feature>
<feature type="binding site" evidence="1">
    <location>
        <position position="607"/>
    </location>
    <ligand>
        <name>Mg(2+)</name>
        <dbReference type="ChEBI" id="CHEBI:18420"/>
        <label>1</label>
        <note>catalytic</note>
    </ligand>
</feature>
<feature type="binding site" evidence="1">
    <location>
        <position position="608"/>
    </location>
    <ligand>
        <name>dTTP</name>
        <dbReference type="ChEBI" id="CHEBI:37568"/>
        <note>substrate</note>
    </ligand>
</feature>
<feature type="binding site" evidence="1">
    <location>
        <position position="609"/>
    </location>
    <ligand>
        <name>dTTP</name>
        <dbReference type="ChEBI" id="CHEBI:37568"/>
        <note>substrate</note>
    </ligand>
</feature>
<feature type="binding site" evidence="1">
    <location>
        <position position="610"/>
    </location>
    <ligand>
        <name>dTTP</name>
        <dbReference type="ChEBI" id="CHEBI:37568"/>
        <note>substrate</note>
    </ligand>
</feature>
<feature type="binding site" evidence="1">
    <location>
        <position position="611"/>
    </location>
    <ligand>
        <name>dTTP</name>
        <dbReference type="ChEBI" id="CHEBI:37568"/>
        <note>substrate</note>
    </ligand>
</feature>
<feature type="binding site" evidence="1">
    <location>
        <position position="612"/>
    </location>
    <ligand>
        <name>dTTP</name>
        <dbReference type="ChEBI" id="CHEBI:37568"/>
        <note>substrate</note>
    </ligand>
</feature>
<feature type="binding site" evidence="1">
    <location>
        <position position="666"/>
    </location>
    <ligand>
        <name>dTTP</name>
        <dbReference type="ChEBI" id="CHEBI:37568"/>
        <note>substrate</note>
    </ligand>
</feature>
<feature type="binding site" evidence="1">
    <location>
        <position position="709"/>
    </location>
    <ligand>
        <name>dTTP</name>
        <dbReference type="ChEBI" id="CHEBI:37568"/>
        <note>substrate</note>
    </ligand>
</feature>
<feature type="binding site" evidence="1">
    <location>
        <position position="709"/>
    </location>
    <ligand>
        <name>Mg(2+)</name>
        <dbReference type="ChEBI" id="CHEBI:18420"/>
        <label>1</label>
        <note>catalytic</note>
    </ligand>
</feature>
<feature type="binding site" evidence="1">
    <location>
        <position position="710"/>
    </location>
    <ligand>
        <name>Mg(2+)</name>
        <dbReference type="ChEBI" id="CHEBI:18420"/>
        <label>1</label>
        <note>catalytic</note>
    </ligand>
</feature>
<feature type="binding site" evidence="1">
    <location>
        <position position="741"/>
    </location>
    <ligand>
        <name>dTTP</name>
        <dbReference type="ChEBI" id="CHEBI:37568"/>
        <note>substrate</note>
    </ligand>
</feature>
<feature type="binding site" evidence="1">
    <location>
        <position position="744"/>
    </location>
    <ligand>
        <name>dTTP</name>
        <dbReference type="ChEBI" id="CHEBI:37568"/>
        <note>substrate</note>
    </ligand>
</feature>
<feature type="sequence conflict" description="In Ref. 2; AAA67727." evidence="5" ref="2">
    <original>S</original>
    <variation>L</variation>
    <location>
        <position position="86"/>
    </location>
</feature>
<feature type="sequence conflict" description="In Ref. 3; CAA27363." evidence="5" ref="3">
    <original>N</original>
    <variation>K</variation>
    <location>
        <position position="246"/>
    </location>
</feature>
<feature type="sequence conflict" description="In Ref. 2; AAA67727." evidence="5" ref="2">
    <original>T</original>
    <variation>K</variation>
    <location>
        <position position="359"/>
    </location>
</feature>
<feature type="sequence conflict" description="In Ref. 2; AAA67727." evidence="5" ref="2">
    <original>L</original>
    <variation>F</variation>
    <location>
        <position position="707"/>
    </location>
</feature>
<feature type="sequence conflict" description="In Ref. 2; AAA67727." evidence="5" ref="2">
    <original>V</original>
    <variation>A</variation>
    <location>
        <position position="736"/>
    </location>
</feature>
<feature type="sequence conflict" description="In Ref. 2; AAA67727." evidence="5" ref="2">
    <original>R</original>
    <variation>W</variation>
    <location>
        <position position="761"/>
    </location>
</feature>
<feature type="sequence conflict" description="In Ref. 2; AAA67727." evidence="5" ref="2">
    <original>A</original>
    <variation>D</variation>
    <location>
        <position position="928"/>
    </location>
</feature>